<organism>
    <name type="scientific">Cryptococcus neoformans var. neoformans serotype D (strain B-3501A)</name>
    <name type="common">Filobasidiella neoformans</name>
    <dbReference type="NCBI Taxonomy" id="283643"/>
    <lineage>
        <taxon>Eukaryota</taxon>
        <taxon>Fungi</taxon>
        <taxon>Dikarya</taxon>
        <taxon>Basidiomycota</taxon>
        <taxon>Agaricomycotina</taxon>
        <taxon>Tremellomycetes</taxon>
        <taxon>Tremellales</taxon>
        <taxon>Cryptococcaceae</taxon>
        <taxon>Cryptococcus</taxon>
        <taxon>Cryptococcus neoformans species complex</taxon>
    </lineage>
</organism>
<proteinExistence type="inferred from homology"/>
<dbReference type="EC" id="3.6.4.13"/>
<dbReference type="EMBL" id="AAEY01000005">
    <property type="protein sequence ID" value="EAL23003.1"/>
    <property type="molecule type" value="Genomic_DNA"/>
</dbReference>
<dbReference type="RefSeq" id="XP_777650.1">
    <property type="nucleotide sequence ID" value="XM_772557.1"/>
</dbReference>
<dbReference type="SMR" id="P0CQ75"/>
<dbReference type="EnsemblFungi" id="AAW41314">
    <property type="protein sequence ID" value="AAW41314"/>
    <property type="gene ID" value="CNA07860"/>
</dbReference>
<dbReference type="GeneID" id="4934036"/>
<dbReference type="KEGG" id="cnb:CNBA7700"/>
<dbReference type="VEuPathDB" id="FungiDB:CNBA7700"/>
<dbReference type="HOGENOM" id="CLU_003041_16_3_1"/>
<dbReference type="OrthoDB" id="6323at5206"/>
<dbReference type="GO" id="GO:0010494">
    <property type="term" value="C:cytoplasmic stress granule"/>
    <property type="evidence" value="ECO:0007669"/>
    <property type="project" value="EnsemblFungi"/>
</dbReference>
<dbReference type="GO" id="GO:0005681">
    <property type="term" value="C:spliceosomal complex"/>
    <property type="evidence" value="ECO:0007669"/>
    <property type="project" value="EnsemblFungi"/>
</dbReference>
<dbReference type="GO" id="GO:0005524">
    <property type="term" value="F:ATP binding"/>
    <property type="evidence" value="ECO:0007669"/>
    <property type="project" value="UniProtKB-KW"/>
</dbReference>
<dbReference type="GO" id="GO:0016887">
    <property type="term" value="F:ATP hydrolysis activity"/>
    <property type="evidence" value="ECO:0007669"/>
    <property type="project" value="RHEA"/>
</dbReference>
<dbReference type="GO" id="GO:0031370">
    <property type="term" value="F:eukaryotic initiation factor 4G binding"/>
    <property type="evidence" value="ECO:0007669"/>
    <property type="project" value="EnsemblFungi"/>
</dbReference>
<dbReference type="GO" id="GO:0051880">
    <property type="term" value="F:G-quadruplex DNA binding"/>
    <property type="evidence" value="ECO:0007669"/>
    <property type="project" value="EnsemblFungi"/>
</dbReference>
<dbReference type="GO" id="GO:0002151">
    <property type="term" value="F:G-quadruplex RNA binding"/>
    <property type="evidence" value="ECO:0007669"/>
    <property type="project" value="EnsemblFungi"/>
</dbReference>
<dbReference type="GO" id="GO:0003729">
    <property type="term" value="F:mRNA binding"/>
    <property type="evidence" value="ECO:0007669"/>
    <property type="project" value="EnsemblFungi"/>
</dbReference>
<dbReference type="GO" id="GO:0003724">
    <property type="term" value="F:RNA helicase activity"/>
    <property type="evidence" value="ECO:0007669"/>
    <property type="project" value="UniProtKB-EC"/>
</dbReference>
<dbReference type="GO" id="GO:0033592">
    <property type="term" value="F:RNA strand annealing activity"/>
    <property type="evidence" value="ECO:0007669"/>
    <property type="project" value="EnsemblFungi"/>
</dbReference>
<dbReference type="GO" id="GO:0003743">
    <property type="term" value="F:translation initiation factor activity"/>
    <property type="evidence" value="ECO:0007669"/>
    <property type="project" value="UniProtKB-KW"/>
</dbReference>
<dbReference type="GO" id="GO:0002183">
    <property type="term" value="P:cytoplasmic translational initiation"/>
    <property type="evidence" value="ECO:0007669"/>
    <property type="project" value="EnsemblFungi"/>
</dbReference>
<dbReference type="GO" id="GO:1990625">
    <property type="term" value="P:negative regulation of cytoplasmic translational initiation in response to stress"/>
    <property type="evidence" value="ECO:0007669"/>
    <property type="project" value="EnsemblFungi"/>
</dbReference>
<dbReference type="GO" id="GO:1901195">
    <property type="term" value="P:positive regulation of formation of translation preinitiation complex"/>
    <property type="evidence" value="ECO:0007669"/>
    <property type="project" value="EnsemblFungi"/>
</dbReference>
<dbReference type="GO" id="GO:0031047">
    <property type="term" value="P:regulatory ncRNA-mediated gene silencing"/>
    <property type="evidence" value="ECO:0007669"/>
    <property type="project" value="EnsemblFungi"/>
</dbReference>
<dbReference type="GO" id="GO:0000390">
    <property type="term" value="P:spliceosomal complex disassembly"/>
    <property type="evidence" value="ECO:0007669"/>
    <property type="project" value="EnsemblFungi"/>
</dbReference>
<dbReference type="CDD" id="cd17967">
    <property type="entry name" value="DEADc_DDX3_DDX4"/>
    <property type="match status" value="1"/>
</dbReference>
<dbReference type="CDD" id="cd18787">
    <property type="entry name" value="SF2_C_DEAD"/>
    <property type="match status" value="1"/>
</dbReference>
<dbReference type="FunFam" id="3.40.50.300:FF:000008">
    <property type="entry name" value="ATP-dependent RNA helicase RhlB"/>
    <property type="match status" value="1"/>
</dbReference>
<dbReference type="FunFam" id="3.40.50.300:FF:000397">
    <property type="entry name" value="Probable ATP-dependent RNA helicase DDX4"/>
    <property type="match status" value="1"/>
</dbReference>
<dbReference type="Gene3D" id="3.40.50.300">
    <property type="entry name" value="P-loop containing nucleotide triphosphate hydrolases"/>
    <property type="match status" value="2"/>
</dbReference>
<dbReference type="InterPro" id="IPR011545">
    <property type="entry name" value="DEAD/DEAH_box_helicase_dom"/>
</dbReference>
<dbReference type="InterPro" id="IPR044763">
    <property type="entry name" value="Ded1/Dbp1_DEADc"/>
</dbReference>
<dbReference type="InterPro" id="IPR014001">
    <property type="entry name" value="Helicase_ATP-bd"/>
</dbReference>
<dbReference type="InterPro" id="IPR001650">
    <property type="entry name" value="Helicase_C-like"/>
</dbReference>
<dbReference type="InterPro" id="IPR027417">
    <property type="entry name" value="P-loop_NTPase"/>
</dbReference>
<dbReference type="InterPro" id="IPR000629">
    <property type="entry name" value="RNA-helicase_DEAD-box_CS"/>
</dbReference>
<dbReference type="InterPro" id="IPR014014">
    <property type="entry name" value="RNA_helicase_DEAD_Q_motif"/>
</dbReference>
<dbReference type="PANTHER" id="PTHR47958">
    <property type="entry name" value="ATP-DEPENDENT RNA HELICASE DBP3"/>
    <property type="match status" value="1"/>
</dbReference>
<dbReference type="Pfam" id="PF00270">
    <property type="entry name" value="DEAD"/>
    <property type="match status" value="1"/>
</dbReference>
<dbReference type="Pfam" id="PF00271">
    <property type="entry name" value="Helicase_C"/>
    <property type="match status" value="1"/>
</dbReference>
<dbReference type="SMART" id="SM00487">
    <property type="entry name" value="DEXDc"/>
    <property type="match status" value="1"/>
</dbReference>
<dbReference type="SMART" id="SM00490">
    <property type="entry name" value="HELICc"/>
    <property type="match status" value="1"/>
</dbReference>
<dbReference type="SUPFAM" id="SSF52540">
    <property type="entry name" value="P-loop containing nucleoside triphosphate hydrolases"/>
    <property type="match status" value="1"/>
</dbReference>
<dbReference type="PROSITE" id="PS00039">
    <property type="entry name" value="DEAD_ATP_HELICASE"/>
    <property type="match status" value="1"/>
</dbReference>
<dbReference type="PROSITE" id="PS51192">
    <property type="entry name" value="HELICASE_ATP_BIND_1"/>
    <property type="match status" value="1"/>
</dbReference>
<dbReference type="PROSITE" id="PS51194">
    <property type="entry name" value="HELICASE_CTER"/>
    <property type="match status" value="1"/>
</dbReference>
<dbReference type="PROSITE" id="PS51195">
    <property type="entry name" value="Q_MOTIF"/>
    <property type="match status" value="1"/>
</dbReference>
<sequence length="637" mass="68050">MAATDVNGLASQMNSVNLNGASQKPQKPAYVPPHLRNRAAPPAAVPPAAPAAYRPSPTGLPTPATTPPTRHIVPAAVAEDDVGGWGAQPRVRKTFEHGAPPGFGSWKNGQHVVGARNTRMEKEMYGEVGDGLHQATGINFDKYADIPVEVSGKGVPEPVTEFTNPPINPVLLENVKYARYATPTPVQKYSIPIVADGRDLMACAQTGSGKTGGFLFPILSALFTYGPSTPPVEQDTGYGYRRTKKVYPTALVLAPTRELVSQIHEEARKFAYRSWVRPAVVYGGADIGSQMRALDRGCDLLSATPGRLVDLIERGKISLANVKYLVLDEADRMLDMGFEPQIRRIVDEEDMPGVLERQTLMFSATFPREIQNLARSFLKEYIFLTVGRVGSTSENITQRVEYVDDQDKRSLLLDLLLAEQSGGLILVFVETKRMADTLCDFLCSRRHNATSIHGDRTQREREAALYAFKSGRAPILVATAVAARGLDIPNVTHVILYDLPNDVAEYTHRIGRTGRAGNVGTSTAFFNRGNTNIGKDLIELLKEANQEVPQWLVEISSERSYGGGGGGGYKGSRGRSTGGGGGARLGGRDMRQGGGGYGGGGRTSGYGGGYGGGGGGAGWGSGGGFPPAGGDSGASWW</sequence>
<gene>
    <name type="primary">DED1</name>
    <name type="ordered locus">CNBA7700</name>
</gene>
<evidence type="ECO:0000250" key="1"/>
<evidence type="ECO:0000255" key="2">
    <source>
        <dbReference type="PROSITE-ProRule" id="PRU00541"/>
    </source>
</evidence>
<evidence type="ECO:0000255" key="3">
    <source>
        <dbReference type="PROSITE-ProRule" id="PRU00542"/>
    </source>
</evidence>
<evidence type="ECO:0000256" key="4">
    <source>
        <dbReference type="SAM" id="MobiDB-lite"/>
    </source>
</evidence>
<evidence type="ECO:0000305" key="5"/>
<comment type="function">
    <text evidence="1">ATP-binding RNA helicase involved in translation initiation. Remodels RNA in response to ADP and ATP concentrations by facilitating disruption, but also formation of RNA duplexes (By similarity).</text>
</comment>
<comment type="catalytic activity">
    <reaction>
        <text>ATP + H2O = ADP + phosphate + H(+)</text>
        <dbReference type="Rhea" id="RHEA:13065"/>
        <dbReference type="ChEBI" id="CHEBI:15377"/>
        <dbReference type="ChEBI" id="CHEBI:15378"/>
        <dbReference type="ChEBI" id="CHEBI:30616"/>
        <dbReference type="ChEBI" id="CHEBI:43474"/>
        <dbReference type="ChEBI" id="CHEBI:456216"/>
        <dbReference type="EC" id="3.6.4.13"/>
    </reaction>
</comment>
<comment type="subcellular location">
    <subcellularLocation>
        <location evidence="1">Cytoplasm</location>
    </subcellularLocation>
</comment>
<comment type="domain">
    <text>The Q motif is unique to and characteristic of the DEAD box family of RNA helicases and controls ATP binding and hydrolysis.</text>
</comment>
<comment type="similarity">
    <text evidence="5">Belongs to the DEAD box helicase family. DDX3/DED1 subfamily.</text>
</comment>
<keyword id="KW-0067">ATP-binding</keyword>
<keyword id="KW-0963">Cytoplasm</keyword>
<keyword id="KW-0347">Helicase</keyword>
<keyword id="KW-0378">Hydrolase</keyword>
<keyword id="KW-0396">Initiation factor</keyword>
<keyword id="KW-0547">Nucleotide-binding</keyword>
<keyword id="KW-0648">Protein biosynthesis</keyword>
<keyword id="KW-0694">RNA-binding</keyword>
<feature type="chain" id="PRO_0000410248" description="ATP-dependent RNA helicase ded1">
    <location>
        <begin position="1"/>
        <end position="637"/>
    </location>
</feature>
<feature type="domain" description="Helicase ATP-binding" evidence="2">
    <location>
        <begin position="191"/>
        <end position="384"/>
    </location>
</feature>
<feature type="domain" description="Helicase C-terminal" evidence="3">
    <location>
        <begin position="395"/>
        <end position="556"/>
    </location>
</feature>
<feature type="region of interest" description="Disordered" evidence="4">
    <location>
        <begin position="15"/>
        <end position="68"/>
    </location>
</feature>
<feature type="region of interest" description="Disordered" evidence="4">
    <location>
        <begin position="560"/>
        <end position="598"/>
    </location>
</feature>
<feature type="short sequence motif" description="Q motif">
    <location>
        <begin position="160"/>
        <end position="188"/>
    </location>
</feature>
<feature type="short sequence motif" description="DEAD box">
    <location>
        <begin position="328"/>
        <end position="331"/>
    </location>
</feature>
<feature type="compositionally biased region" description="Polar residues" evidence="4">
    <location>
        <begin position="15"/>
        <end position="25"/>
    </location>
</feature>
<feature type="compositionally biased region" description="Gly residues" evidence="4">
    <location>
        <begin position="561"/>
        <end position="585"/>
    </location>
</feature>
<feature type="binding site" evidence="2">
    <location>
        <begin position="204"/>
        <end position="211"/>
    </location>
    <ligand>
        <name>ATP</name>
        <dbReference type="ChEBI" id="CHEBI:30616"/>
    </ligand>
</feature>
<accession>P0CQ75</accession>
<accession>Q55YR5</accession>
<accession>Q5KN36</accession>
<protein>
    <recommendedName>
        <fullName>ATP-dependent RNA helicase ded1</fullName>
        <ecNumber>3.6.4.13</ecNumber>
    </recommendedName>
</protein>
<name>DED1_CRYNB</name>
<reference key="1">
    <citation type="journal article" date="2005" name="Science">
        <title>The genome of the basidiomycetous yeast and human pathogen Cryptococcus neoformans.</title>
        <authorList>
            <person name="Loftus B.J."/>
            <person name="Fung E."/>
            <person name="Roncaglia P."/>
            <person name="Rowley D."/>
            <person name="Amedeo P."/>
            <person name="Bruno D."/>
            <person name="Vamathevan J."/>
            <person name="Miranda M."/>
            <person name="Anderson I.J."/>
            <person name="Fraser J.A."/>
            <person name="Allen J.E."/>
            <person name="Bosdet I.E."/>
            <person name="Brent M.R."/>
            <person name="Chiu R."/>
            <person name="Doering T.L."/>
            <person name="Donlin M.J."/>
            <person name="D'Souza C.A."/>
            <person name="Fox D.S."/>
            <person name="Grinberg V."/>
            <person name="Fu J."/>
            <person name="Fukushima M."/>
            <person name="Haas B.J."/>
            <person name="Huang J.C."/>
            <person name="Janbon G."/>
            <person name="Jones S.J.M."/>
            <person name="Koo H.L."/>
            <person name="Krzywinski M.I."/>
            <person name="Kwon-Chung K.J."/>
            <person name="Lengeler K.B."/>
            <person name="Maiti R."/>
            <person name="Marra M.A."/>
            <person name="Marra R.E."/>
            <person name="Mathewson C.A."/>
            <person name="Mitchell T.G."/>
            <person name="Pertea M."/>
            <person name="Riggs F.R."/>
            <person name="Salzberg S.L."/>
            <person name="Schein J.E."/>
            <person name="Shvartsbeyn A."/>
            <person name="Shin H."/>
            <person name="Shumway M."/>
            <person name="Specht C.A."/>
            <person name="Suh B.B."/>
            <person name="Tenney A."/>
            <person name="Utterback T.R."/>
            <person name="Wickes B.L."/>
            <person name="Wortman J.R."/>
            <person name="Wye N.H."/>
            <person name="Kronstad J.W."/>
            <person name="Lodge J.K."/>
            <person name="Heitman J."/>
            <person name="Davis R.W."/>
            <person name="Fraser C.M."/>
            <person name="Hyman R.W."/>
        </authorList>
    </citation>
    <scope>NUCLEOTIDE SEQUENCE [LARGE SCALE GENOMIC DNA]</scope>
    <source>
        <strain>B-3501A</strain>
    </source>
</reference>